<accession>Q9J507</accession>
<reference key="1">
    <citation type="journal article" date="2000" name="J. Virol.">
        <title>The genome of fowlpox virus.</title>
        <authorList>
            <person name="Afonso C.L."/>
            <person name="Tulman E.R."/>
            <person name="Lu Z."/>
            <person name="Zsak L."/>
            <person name="Kutish G.F."/>
            <person name="Rock D.L."/>
        </authorList>
    </citation>
    <scope>NUCLEOTIDE SEQUENCE [LARGE SCALE GENOMIC DNA]</scope>
</reference>
<organism>
    <name type="scientific">Fowlpox virus (strain NVSL)</name>
    <name type="common">FPV</name>
    <dbReference type="NCBI Taxonomy" id="928301"/>
    <lineage>
        <taxon>Viruses</taxon>
        <taxon>Varidnaviria</taxon>
        <taxon>Bamfordvirae</taxon>
        <taxon>Nucleocytoviricota</taxon>
        <taxon>Pokkesviricetes</taxon>
        <taxon>Chitovirales</taxon>
        <taxon>Poxviridae</taxon>
        <taxon>Chordopoxvirinae</taxon>
        <taxon>Avipoxvirus</taxon>
        <taxon>Fowlpox virus</taxon>
    </lineage>
</organism>
<protein>
    <recommendedName>
        <fullName>Putative ankyrin repeat protein FPV228</fullName>
    </recommendedName>
</protein>
<dbReference type="EMBL" id="AF198100">
    <property type="protein sequence ID" value="AAF44572.1"/>
    <property type="molecule type" value="Genomic_DNA"/>
</dbReference>
<dbReference type="RefSeq" id="NP_039191.1">
    <property type="nucleotide sequence ID" value="NC_002188.1"/>
</dbReference>
<dbReference type="SMR" id="Q9J507"/>
<dbReference type="GeneID" id="1486800"/>
<dbReference type="KEGG" id="vg:1486800"/>
<dbReference type="Proteomes" id="UP000008597">
    <property type="component" value="Segment"/>
</dbReference>
<dbReference type="Gene3D" id="1.25.40.20">
    <property type="entry name" value="Ankyrin repeat-containing domain"/>
    <property type="match status" value="2"/>
</dbReference>
<dbReference type="InterPro" id="IPR002110">
    <property type="entry name" value="Ankyrin_rpt"/>
</dbReference>
<dbReference type="InterPro" id="IPR036770">
    <property type="entry name" value="Ankyrin_rpt-contain_sf"/>
</dbReference>
<dbReference type="InterPro" id="IPR018272">
    <property type="entry name" value="PRANC_domain"/>
</dbReference>
<dbReference type="PANTHER" id="PTHR24126:SF14">
    <property type="entry name" value="ANK_REP_REGION DOMAIN-CONTAINING PROTEIN"/>
    <property type="match status" value="1"/>
</dbReference>
<dbReference type="PANTHER" id="PTHR24126">
    <property type="entry name" value="ANKYRIN REPEAT, PH AND SEC7 DOMAIN CONTAINING PROTEIN SECG-RELATED"/>
    <property type="match status" value="1"/>
</dbReference>
<dbReference type="Pfam" id="PF12796">
    <property type="entry name" value="Ank_2"/>
    <property type="match status" value="3"/>
</dbReference>
<dbReference type="Pfam" id="PF09372">
    <property type="entry name" value="PRANC"/>
    <property type="match status" value="1"/>
</dbReference>
<dbReference type="PRINTS" id="PR01415">
    <property type="entry name" value="ANKYRIN"/>
</dbReference>
<dbReference type="SMART" id="SM00248">
    <property type="entry name" value="ANK"/>
    <property type="match status" value="9"/>
</dbReference>
<dbReference type="SUPFAM" id="SSF48403">
    <property type="entry name" value="Ankyrin repeat"/>
    <property type="match status" value="2"/>
</dbReference>
<dbReference type="PROSITE" id="PS50297">
    <property type="entry name" value="ANK_REP_REGION"/>
    <property type="match status" value="1"/>
</dbReference>
<dbReference type="PROSITE" id="PS50088">
    <property type="entry name" value="ANK_REPEAT"/>
    <property type="match status" value="4"/>
</dbReference>
<sequence>MLIMSSIKELYHAVSINDRFSVVNILEKKNIPIDYINFHPDNPLLEAVKLTNTDMIKTLLDYGICINTRDILGNTALHLIAMDYYVPHNDIKHGHHNDYVFKMVPIINLFLRKKANINACNNLNQTPLHLAAESNNTTLLKILLYNNAKVNILDIYGNTCLHYAVRGRNIESIKLLLSYNVDVNIRNFTYWYSALHEAVQIGDSKISRCIVSLLLCNKANVNTRCRLNTTPIFYAINCIDTLKLLLENGADINATSDNDNAVIHLATENRRYDIIKTLLDYGADVNMIGYRGKTPLYYATENYSYRNMKLLLDHGSNPNIADHIMNTPLFISIKCTCIENTKMLLDSGADINHVNDNGETPISYLAPNLIPTPVAILVISHIVLLKTKYNHIKYLPGFIKNISVIQNFTKFNNIKKVCEDEFRFMRSVSLSANHNLSSYICNDNLHTLVRFIKNPKIYYSINKIRIYRNRLYSIIERLLNRKKLHDLVLELIKDIGVFNKLPLDIISMILDFLSDDDLALMAIFN</sequence>
<proteinExistence type="predicted"/>
<organismHost>
    <name type="scientific">Vertebrata</name>
    <dbReference type="NCBI Taxonomy" id="7742"/>
</organismHost>
<name>V228_FOWPN</name>
<gene>
    <name type="ordered locus">FPV228</name>
</gene>
<feature type="chain" id="PRO_0000067120" description="Putative ankyrin repeat protein FPV228">
    <location>
        <begin position="1"/>
        <end position="525"/>
    </location>
</feature>
<feature type="repeat" description="ANK 1">
    <location>
        <begin position="39"/>
        <end position="71"/>
    </location>
</feature>
<feature type="repeat" description="ANK 2">
    <location>
        <begin position="72"/>
        <end position="122"/>
    </location>
</feature>
<feature type="repeat" description="ANK 3">
    <location>
        <begin position="123"/>
        <end position="152"/>
    </location>
</feature>
<feature type="repeat" description="ANK 4">
    <location>
        <begin position="156"/>
        <end position="185"/>
    </location>
</feature>
<feature type="repeat" description="ANK 5">
    <location>
        <begin position="190"/>
        <end position="226"/>
    </location>
</feature>
<feature type="repeat" description="ANK 6">
    <location>
        <begin position="227"/>
        <end position="254"/>
    </location>
</feature>
<feature type="repeat" description="ANK 7">
    <location>
        <begin position="258"/>
        <end position="287"/>
    </location>
</feature>
<feature type="repeat" description="ANK 8">
    <location>
        <begin position="291"/>
        <end position="320"/>
    </location>
</feature>
<feature type="repeat" description="ANK 9">
    <location>
        <begin position="324"/>
        <end position="353"/>
    </location>
</feature>
<keyword id="KW-0040">ANK repeat</keyword>
<keyword id="KW-1185">Reference proteome</keyword>
<keyword id="KW-0677">Repeat</keyword>